<comment type="catalytic activity">
    <reaction evidence="1">
        <text>2-(N(omega)-L-arginino)succinate = fumarate + L-arginine</text>
        <dbReference type="Rhea" id="RHEA:24020"/>
        <dbReference type="ChEBI" id="CHEBI:29806"/>
        <dbReference type="ChEBI" id="CHEBI:32682"/>
        <dbReference type="ChEBI" id="CHEBI:57472"/>
        <dbReference type="EC" id="4.3.2.1"/>
    </reaction>
</comment>
<comment type="pathway">
    <text evidence="1">Amino-acid biosynthesis; L-arginine biosynthesis; L-arginine from L-ornithine and carbamoyl phosphate: step 3/3.</text>
</comment>
<comment type="subcellular location">
    <subcellularLocation>
        <location evidence="1">Cytoplasm</location>
    </subcellularLocation>
</comment>
<comment type="similarity">
    <text evidence="1">Belongs to the lyase 1 family. Argininosuccinate lyase subfamily.</text>
</comment>
<dbReference type="EC" id="4.3.2.1" evidence="1"/>
<dbReference type="EMBL" id="CR767821">
    <property type="protein sequence ID" value="CAH57899.1"/>
    <property type="molecule type" value="Genomic_DNA"/>
</dbReference>
<dbReference type="EMBL" id="CR925678">
    <property type="protein sequence ID" value="CAI26676.1"/>
    <property type="molecule type" value="Genomic_DNA"/>
</dbReference>
<dbReference type="RefSeq" id="WP_011154867.1">
    <property type="nucleotide sequence ID" value="NC_005295.2"/>
</dbReference>
<dbReference type="SMR" id="Q5HBZ4"/>
<dbReference type="GeneID" id="33058297"/>
<dbReference type="KEGG" id="eru:Erum1830"/>
<dbReference type="KEGG" id="erw:ERWE_CDS_01820"/>
<dbReference type="eggNOG" id="COG0165">
    <property type="taxonomic scope" value="Bacteria"/>
</dbReference>
<dbReference type="HOGENOM" id="CLU_027272_2_3_5"/>
<dbReference type="UniPathway" id="UPA00068">
    <property type="reaction ID" value="UER00114"/>
</dbReference>
<dbReference type="Proteomes" id="UP000001021">
    <property type="component" value="Chromosome"/>
</dbReference>
<dbReference type="GO" id="GO:0005829">
    <property type="term" value="C:cytosol"/>
    <property type="evidence" value="ECO:0007669"/>
    <property type="project" value="TreeGrafter"/>
</dbReference>
<dbReference type="GO" id="GO:0004056">
    <property type="term" value="F:argininosuccinate lyase activity"/>
    <property type="evidence" value="ECO:0007669"/>
    <property type="project" value="UniProtKB-UniRule"/>
</dbReference>
<dbReference type="GO" id="GO:0042450">
    <property type="term" value="P:arginine biosynthetic process via ornithine"/>
    <property type="evidence" value="ECO:0007669"/>
    <property type="project" value="InterPro"/>
</dbReference>
<dbReference type="GO" id="GO:0006526">
    <property type="term" value="P:L-arginine biosynthetic process"/>
    <property type="evidence" value="ECO:0007669"/>
    <property type="project" value="UniProtKB-UniRule"/>
</dbReference>
<dbReference type="CDD" id="cd01359">
    <property type="entry name" value="Argininosuccinate_lyase"/>
    <property type="match status" value="1"/>
</dbReference>
<dbReference type="FunFam" id="1.10.275.10:FF:000002">
    <property type="entry name" value="Argininosuccinate lyase"/>
    <property type="match status" value="1"/>
</dbReference>
<dbReference type="FunFam" id="1.10.40.30:FF:000001">
    <property type="entry name" value="Argininosuccinate lyase"/>
    <property type="match status" value="1"/>
</dbReference>
<dbReference type="FunFam" id="1.20.200.10:FF:000006">
    <property type="entry name" value="Argininosuccinate lyase"/>
    <property type="match status" value="1"/>
</dbReference>
<dbReference type="Gene3D" id="1.10.40.30">
    <property type="entry name" value="Fumarase/aspartase (C-terminal domain)"/>
    <property type="match status" value="1"/>
</dbReference>
<dbReference type="Gene3D" id="1.20.200.10">
    <property type="entry name" value="Fumarase/aspartase (Central domain)"/>
    <property type="match status" value="1"/>
</dbReference>
<dbReference type="Gene3D" id="1.10.275.10">
    <property type="entry name" value="Fumarase/aspartase (N-terminal domain)"/>
    <property type="match status" value="1"/>
</dbReference>
<dbReference type="HAMAP" id="MF_00006">
    <property type="entry name" value="Arg_succ_lyase"/>
    <property type="match status" value="1"/>
</dbReference>
<dbReference type="InterPro" id="IPR029419">
    <property type="entry name" value="Arg_succ_lyase_C"/>
</dbReference>
<dbReference type="InterPro" id="IPR009049">
    <property type="entry name" value="Argininosuccinate_lyase"/>
</dbReference>
<dbReference type="InterPro" id="IPR024083">
    <property type="entry name" value="Fumarase/histidase_N"/>
</dbReference>
<dbReference type="InterPro" id="IPR020557">
    <property type="entry name" value="Fumarate_lyase_CS"/>
</dbReference>
<dbReference type="InterPro" id="IPR000362">
    <property type="entry name" value="Fumarate_lyase_fam"/>
</dbReference>
<dbReference type="InterPro" id="IPR022761">
    <property type="entry name" value="Fumarate_lyase_N"/>
</dbReference>
<dbReference type="InterPro" id="IPR008948">
    <property type="entry name" value="L-Aspartase-like"/>
</dbReference>
<dbReference type="NCBIfam" id="TIGR00838">
    <property type="entry name" value="argH"/>
    <property type="match status" value="1"/>
</dbReference>
<dbReference type="PANTHER" id="PTHR43814">
    <property type="entry name" value="ARGININOSUCCINATE LYASE"/>
    <property type="match status" value="1"/>
</dbReference>
<dbReference type="PANTHER" id="PTHR43814:SF1">
    <property type="entry name" value="ARGININOSUCCINATE LYASE"/>
    <property type="match status" value="1"/>
</dbReference>
<dbReference type="Pfam" id="PF14698">
    <property type="entry name" value="ASL_C2"/>
    <property type="match status" value="1"/>
</dbReference>
<dbReference type="Pfam" id="PF00206">
    <property type="entry name" value="Lyase_1"/>
    <property type="match status" value="1"/>
</dbReference>
<dbReference type="PRINTS" id="PR00145">
    <property type="entry name" value="ARGSUCLYASE"/>
</dbReference>
<dbReference type="PRINTS" id="PR00149">
    <property type="entry name" value="FUMRATELYASE"/>
</dbReference>
<dbReference type="SUPFAM" id="SSF48557">
    <property type="entry name" value="L-aspartase-like"/>
    <property type="match status" value="1"/>
</dbReference>
<dbReference type="PROSITE" id="PS00163">
    <property type="entry name" value="FUMARATE_LYASES"/>
    <property type="match status" value="1"/>
</dbReference>
<accession>Q5HBZ4</accession>
<accession>Q5FCY5</accession>
<keyword id="KW-0028">Amino-acid biosynthesis</keyword>
<keyword id="KW-0055">Arginine biosynthesis</keyword>
<keyword id="KW-0963">Cytoplasm</keyword>
<keyword id="KW-0456">Lyase</keyword>
<sequence length="462" mass="52450">MTNPLWGGRFTTSSNDIMKKINESISFDQALYEEDILTSIAHCKMLVNQKIISKYEGQLIIHGLEVIQKQIESGNFEFSTDLEDIHMNIEYSLKKMIGNIAGKLHTARSRNDQIATDLKLWIRKSIKKLEQQLHKLQSTLLNIAENHYDTIMPGFTHLQIAQPVTLGHHLMAYFEMLKRDRSRWQDLYKRMNQCPAGSAALAGTSFPIDRHFIAQELGFDSPTENSIDAVSDRDYIIEFLSNASICIMHLSRLAEEIILWCSYNFKFITLSDNITTGSSIMPQKKNPDAAELIRGKTGRIFSSLNHILIVMKGLPLAYSKDMQEDKEPLFDAERNLILCIEAMNSMLNNITINSENMLKAAEHDYSTATDLADWLVKHINLSFRESHEITGQIVKLAEHNKCKIHELTLTQLQKIIPSITEDVFSVLSAKNSVTSRTSYGGTAPINVLQAIKNGRIYLENTD</sequence>
<proteinExistence type="inferred from homology"/>
<organism>
    <name type="scientific">Ehrlichia ruminantium (strain Welgevonden)</name>
    <dbReference type="NCBI Taxonomy" id="254945"/>
    <lineage>
        <taxon>Bacteria</taxon>
        <taxon>Pseudomonadati</taxon>
        <taxon>Pseudomonadota</taxon>
        <taxon>Alphaproteobacteria</taxon>
        <taxon>Rickettsiales</taxon>
        <taxon>Anaplasmataceae</taxon>
        <taxon>Ehrlichia</taxon>
    </lineage>
</organism>
<gene>
    <name evidence="1" type="primary">argH</name>
    <name type="ordered locus">Erum1830</name>
    <name type="ordered locus">ERWE_CDS_01820</name>
</gene>
<reference key="1">
    <citation type="journal article" date="2005" name="Proc. Natl. Acad. Sci. U.S.A.">
        <title>The genome of the heartwater agent Ehrlichia ruminantium contains multiple tandem repeats of actively variable copy number.</title>
        <authorList>
            <person name="Collins N.E."/>
            <person name="Liebenberg J."/>
            <person name="de Villiers E.P."/>
            <person name="Brayton K.A."/>
            <person name="Louw E."/>
            <person name="Pretorius A."/>
            <person name="Faber F.E."/>
            <person name="van Heerden H."/>
            <person name="Josemans A."/>
            <person name="van Kleef M."/>
            <person name="Steyn H.C."/>
            <person name="van Strijp M.F."/>
            <person name="Zweygarth E."/>
            <person name="Jongejan F."/>
            <person name="Maillard J.C."/>
            <person name="Berthier D."/>
            <person name="Botha M."/>
            <person name="Joubert F."/>
            <person name="Corton C.H."/>
            <person name="Thomson N.R."/>
            <person name="Allsopp M.T."/>
            <person name="Allsopp B.A."/>
        </authorList>
    </citation>
    <scope>NUCLEOTIDE SEQUENCE [LARGE SCALE GENOMIC DNA]</scope>
    <source>
        <strain>Welgevonden</strain>
    </source>
</reference>
<reference key="2">
    <citation type="journal article" date="2006" name="J. Bacteriol.">
        <title>Comparative genomic analysis of three strains of Ehrlichia ruminantium reveals an active process of genome size plasticity.</title>
        <authorList>
            <person name="Frutos R."/>
            <person name="Viari A."/>
            <person name="Ferraz C."/>
            <person name="Morgat A."/>
            <person name="Eychenie S."/>
            <person name="Kandassamy Y."/>
            <person name="Chantal I."/>
            <person name="Bensaid A."/>
            <person name="Coissac E."/>
            <person name="Vachiery N."/>
            <person name="Demaille J."/>
            <person name="Martinez D."/>
        </authorList>
    </citation>
    <scope>NUCLEOTIDE SEQUENCE [LARGE SCALE GENOMIC DNA]</scope>
    <source>
        <strain>Welgevonden</strain>
    </source>
</reference>
<feature type="chain" id="PRO_0000240730" description="Argininosuccinate lyase">
    <location>
        <begin position="1"/>
        <end position="462"/>
    </location>
</feature>
<name>ARLY_EHRRW</name>
<evidence type="ECO:0000255" key="1">
    <source>
        <dbReference type="HAMAP-Rule" id="MF_00006"/>
    </source>
</evidence>
<protein>
    <recommendedName>
        <fullName evidence="1">Argininosuccinate lyase</fullName>
        <shortName evidence="1">ASAL</shortName>
        <ecNumber evidence="1">4.3.2.1</ecNumber>
    </recommendedName>
    <alternativeName>
        <fullName evidence="1">Arginosuccinase</fullName>
    </alternativeName>
</protein>